<dbReference type="EC" id="2.6.1.27" evidence="5"/>
<dbReference type="EC" id="2.6.1.5" evidence="5"/>
<dbReference type="EC" id="2.6.1.88" evidence="4 5"/>
<dbReference type="EMBL" id="AC018848">
    <property type="protein sequence ID" value="AAG52437.1"/>
    <property type="molecule type" value="Genomic_DNA"/>
</dbReference>
<dbReference type="EMBL" id="CP002684">
    <property type="protein sequence ID" value="AEE36391.1"/>
    <property type="molecule type" value="Genomic_DNA"/>
</dbReference>
<dbReference type="EMBL" id="CP002684">
    <property type="protein sequence ID" value="ANM59817.1"/>
    <property type="molecule type" value="Genomic_DNA"/>
</dbReference>
<dbReference type="EMBL" id="CP002684">
    <property type="protein sequence ID" value="ANM59818.1"/>
    <property type="molecule type" value="Genomic_DNA"/>
</dbReference>
<dbReference type="EMBL" id="CP002684">
    <property type="protein sequence ID" value="ANM59819.1"/>
    <property type="molecule type" value="Genomic_DNA"/>
</dbReference>
<dbReference type="EMBL" id="AY093159">
    <property type="protein sequence ID" value="AAM13158.1"/>
    <property type="molecule type" value="mRNA"/>
</dbReference>
<dbReference type="EMBL" id="BT008854">
    <property type="protein sequence ID" value="AAP68293.1"/>
    <property type="molecule type" value="mRNA"/>
</dbReference>
<dbReference type="PIR" id="C96835">
    <property type="entry name" value="C96835"/>
</dbReference>
<dbReference type="RefSeq" id="NP_001322147.1">
    <property type="nucleotide sequence ID" value="NM_001334979.1"/>
</dbReference>
<dbReference type="RefSeq" id="NP_001322148.1">
    <property type="nucleotide sequence ID" value="NM_001334980.1"/>
</dbReference>
<dbReference type="RefSeq" id="NP_001322149.1">
    <property type="nucleotide sequence ID" value="NM_001334981.1"/>
</dbReference>
<dbReference type="RefSeq" id="NP_178152.1">
    <property type="nucleotide sequence ID" value="NM_106685.5"/>
</dbReference>
<dbReference type="SMR" id="Q9C969"/>
<dbReference type="FunCoup" id="Q9C969">
    <property type="interactions" value="748"/>
</dbReference>
<dbReference type="STRING" id="3702.Q9C969"/>
<dbReference type="iPTMnet" id="Q9C969"/>
<dbReference type="PaxDb" id="3702-AT1G80360.1"/>
<dbReference type="ProteomicsDB" id="232231"/>
<dbReference type="EnsemblPlants" id="AT1G80360.1">
    <property type="protein sequence ID" value="AT1G80360.1"/>
    <property type="gene ID" value="AT1G80360"/>
</dbReference>
<dbReference type="EnsemblPlants" id="AT1G80360.2">
    <property type="protein sequence ID" value="AT1G80360.2"/>
    <property type="gene ID" value="AT1G80360"/>
</dbReference>
<dbReference type="EnsemblPlants" id="AT1G80360.3">
    <property type="protein sequence ID" value="AT1G80360.3"/>
    <property type="gene ID" value="AT1G80360"/>
</dbReference>
<dbReference type="EnsemblPlants" id="AT1G80360.4">
    <property type="protein sequence ID" value="AT1G80360.4"/>
    <property type="gene ID" value="AT1G80360"/>
</dbReference>
<dbReference type="GeneID" id="844376"/>
<dbReference type="Gramene" id="AT1G80360.1">
    <property type="protein sequence ID" value="AT1G80360.1"/>
    <property type="gene ID" value="AT1G80360"/>
</dbReference>
<dbReference type="Gramene" id="AT1G80360.2">
    <property type="protein sequence ID" value="AT1G80360.2"/>
    <property type="gene ID" value="AT1G80360"/>
</dbReference>
<dbReference type="Gramene" id="AT1G80360.3">
    <property type="protein sequence ID" value="AT1G80360.3"/>
    <property type="gene ID" value="AT1G80360"/>
</dbReference>
<dbReference type="Gramene" id="AT1G80360.4">
    <property type="protein sequence ID" value="AT1G80360.4"/>
    <property type="gene ID" value="AT1G80360"/>
</dbReference>
<dbReference type="KEGG" id="ath:AT1G80360"/>
<dbReference type="Araport" id="AT1G80360"/>
<dbReference type="TAIR" id="AT1G80360">
    <property type="gene designation" value="VAS1"/>
</dbReference>
<dbReference type="eggNOG" id="KOG0257">
    <property type="taxonomic scope" value="Eukaryota"/>
</dbReference>
<dbReference type="HOGENOM" id="CLU_017584_4_1_1"/>
<dbReference type="InParanoid" id="Q9C969"/>
<dbReference type="OMA" id="RIGYMVI"/>
<dbReference type="PhylomeDB" id="Q9C969"/>
<dbReference type="BioCyc" id="ARA:AT1G80360-MONOMER"/>
<dbReference type="BioCyc" id="MetaCyc:AT1G80360-MONOMER"/>
<dbReference type="BRENDA" id="2.6.1.57">
    <property type="organism ID" value="399"/>
</dbReference>
<dbReference type="BRENDA" id="2.6.1.99">
    <property type="organism ID" value="399"/>
</dbReference>
<dbReference type="PRO" id="PR:Q9C969"/>
<dbReference type="Proteomes" id="UP000006548">
    <property type="component" value="Chromosome 1"/>
</dbReference>
<dbReference type="ExpressionAtlas" id="Q9C969">
    <property type="expression patterns" value="baseline and differential"/>
</dbReference>
<dbReference type="GO" id="GO:0005737">
    <property type="term" value="C:cytoplasm"/>
    <property type="evidence" value="ECO:0000314"/>
    <property type="project" value="TAIR"/>
</dbReference>
<dbReference type="GO" id="GO:0005829">
    <property type="term" value="C:cytosol"/>
    <property type="evidence" value="ECO:0007005"/>
    <property type="project" value="TAIR"/>
</dbReference>
<dbReference type="GO" id="GO:0005739">
    <property type="term" value="C:mitochondrion"/>
    <property type="evidence" value="ECO:0007005"/>
    <property type="project" value="TAIR"/>
</dbReference>
<dbReference type="GO" id="GO:0050362">
    <property type="term" value="F:L-tryptophan:2-oxoglutarate aminotransferase activity"/>
    <property type="evidence" value="ECO:0007669"/>
    <property type="project" value="UniProtKB-EC"/>
</dbReference>
<dbReference type="GO" id="GO:0004838">
    <property type="term" value="F:L-tyrosine-2-oxoglutarate transaminase activity"/>
    <property type="evidence" value="ECO:0007669"/>
    <property type="project" value="RHEA"/>
</dbReference>
<dbReference type="GO" id="GO:0010326">
    <property type="term" value="F:methionine-oxo-acid transaminase activity"/>
    <property type="evidence" value="ECO:0000314"/>
    <property type="project" value="TAIR"/>
</dbReference>
<dbReference type="GO" id="GO:0030170">
    <property type="term" value="F:pyridoxal phosphate binding"/>
    <property type="evidence" value="ECO:0007669"/>
    <property type="project" value="InterPro"/>
</dbReference>
<dbReference type="GO" id="GO:0008483">
    <property type="term" value="F:transaminase activity"/>
    <property type="evidence" value="ECO:0000314"/>
    <property type="project" value="UniProtKB"/>
</dbReference>
<dbReference type="GO" id="GO:0009851">
    <property type="term" value="P:auxin biosynthetic process"/>
    <property type="evidence" value="ECO:0000315"/>
    <property type="project" value="UniProtKB"/>
</dbReference>
<dbReference type="GO" id="GO:0009693">
    <property type="term" value="P:ethylene biosynthetic process"/>
    <property type="evidence" value="ECO:0007669"/>
    <property type="project" value="UniProtKB-KW"/>
</dbReference>
<dbReference type="GO" id="GO:0006569">
    <property type="term" value="P:L-tryptophan catabolic process"/>
    <property type="evidence" value="ECO:0007669"/>
    <property type="project" value="UniProtKB-KW"/>
</dbReference>
<dbReference type="GO" id="GO:0006555">
    <property type="term" value="P:methionine metabolic process"/>
    <property type="evidence" value="ECO:0000314"/>
    <property type="project" value="UniProtKB"/>
</dbReference>
<dbReference type="GO" id="GO:0010366">
    <property type="term" value="P:negative regulation of ethylene biosynthetic process"/>
    <property type="evidence" value="ECO:0000315"/>
    <property type="project" value="TAIR"/>
</dbReference>
<dbReference type="GO" id="GO:1901997">
    <property type="term" value="P:negative regulation of indoleacetic acid biosynthetic process via tryptophan"/>
    <property type="evidence" value="ECO:0000314"/>
    <property type="project" value="TAIR"/>
</dbReference>
<dbReference type="GO" id="GO:0009698">
    <property type="term" value="P:phenylpropanoid metabolic process"/>
    <property type="evidence" value="ECO:0007669"/>
    <property type="project" value="UniProtKB-KW"/>
</dbReference>
<dbReference type="GO" id="GO:0009641">
    <property type="term" value="P:shade avoidance"/>
    <property type="evidence" value="ECO:0000315"/>
    <property type="project" value="TAIR"/>
</dbReference>
<dbReference type="CDD" id="cd00609">
    <property type="entry name" value="AAT_like"/>
    <property type="match status" value="1"/>
</dbReference>
<dbReference type="FunFam" id="3.40.640.10:FF:000261">
    <property type="entry name" value="Aromatic aminotransferase ISS1"/>
    <property type="match status" value="1"/>
</dbReference>
<dbReference type="Gene3D" id="3.40.640.10">
    <property type="entry name" value="Type I PLP-dependent aspartate aminotransferase-like (Major domain)"/>
    <property type="match status" value="1"/>
</dbReference>
<dbReference type="InterPro" id="IPR004839">
    <property type="entry name" value="Aminotransferase_I/II_large"/>
</dbReference>
<dbReference type="InterPro" id="IPR050596">
    <property type="entry name" value="AspAT/PAT-like"/>
</dbReference>
<dbReference type="InterPro" id="IPR004838">
    <property type="entry name" value="NHTrfase_class1_PyrdxlP-BS"/>
</dbReference>
<dbReference type="InterPro" id="IPR015424">
    <property type="entry name" value="PyrdxlP-dep_Trfase"/>
</dbReference>
<dbReference type="InterPro" id="IPR015421">
    <property type="entry name" value="PyrdxlP-dep_Trfase_major"/>
</dbReference>
<dbReference type="PANTHER" id="PTHR46383:SF5">
    <property type="entry name" value="AMINOTRANSFERASE CLASS I_CLASSII DOMAIN-CONTAINING PROTEIN"/>
    <property type="match status" value="1"/>
</dbReference>
<dbReference type="PANTHER" id="PTHR46383">
    <property type="entry name" value="ASPARTATE AMINOTRANSFERASE"/>
    <property type="match status" value="1"/>
</dbReference>
<dbReference type="Pfam" id="PF00155">
    <property type="entry name" value="Aminotran_1_2"/>
    <property type="match status" value="1"/>
</dbReference>
<dbReference type="SUPFAM" id="SSF53383">
    <property type="entry name" value="PLP-dependent transferases"/>
    <property type="match status" value="1"/>
</dbReference>
<dbReference type="PROSITE" id="PS00105">
    <property type="entry name" value="AA_TRANSFER_CLASS_1"/>
    <property type="match status" value="1"/>
</dbReference>
<reference key="1">
    <citation type="journal article" date="2000" name="Nature">
        <title>Sequence and analysis of chromosome 1 of the plant Arabidopsis thaliana.</title>
        <authorList>
            <person name="Theologis A."/>
            <person name="Ecker J.R."/>
            <person name="Palm C.J."/>
            <person name="Federspiel N.A."/>
            <person name="Kaul S."/>
            <person name="White O."/>
            <person name="Alonso J."/>
            <person name="Altafi H."/>
            <person name="Araujo R."/>
            <person name="Bowman C.L."/>
            <person name="Brooks S.Y."/>
            <person name="Buehler E."/>
            <person name="Chan A."/>
            <person name="Chao Q."/>
            <person name="Chen H."/>
            <person name="Cheuk R.F."/>
            <person name="Chin C.W."/>
            <person name="Chung M.K."/>
            <person name="Conn L."/>
            <person name="Conway A.B."/>
            <person name="Conway A.R."/>
            <person name="Creasy T.H."/>
            <person name="Dewar K."/>
            <person name="Dunn P."/>
            <person name="Etgu P."/>
            <person name="Feldblyum T.V."/>
            <person name="Feng J.-D."/>
            <person name="Fong B."/>
            <person name="Fujii C.Y."/>
            <person name="Gill J.E."/>
            <person name="Goldsmith A.D."/>
            <person name="Haas B."/>
            <person name="Hansen N.F."/>
            <person name="Hughes B."/>
            <person name="Huizar L."/>
            <person name="Hunter J.L."/>
            <person name="Jenkins J."/>
            <person name="Johnson-Hopson C."/>
            <person name="Khan S."/>
            <person name="Khaykin E."/>
            <person name="Kim C.J."/>
            <person name="Koo H.L."/>
            <person name="Kremenetskaia I."/>
            <person name="Kurtz D.B."/>
            <person name="Kwan A."/>
            <person name="Lam B."/>
            <person name="Langin-Hooper S."/>
            <person name="Lee A."/>
            <person name="Lee J.M."/>
            <person name="Lenz C.A."/>
            <person name="Li J.H."/>
            <person name="Li Y.-P."/>
            <person name="Lin X."/>
            <person name="Liu S.X."/>
            <person name="Liu Z.A."/>
            <person name="Luros J.S."/>
            <person name="Maiti R."/>
            <person name="Marziali A."/>
            <person name="Militscher J."/>
            <person name="Miranda M."/>
            <person name="Nguyen M."/>
            <person name="Nierman W.C."/>
            <person name="Osborne B.I."/>
            <person name="Pai G."/>
            <person name="Peterson J."/>
            <person name="Pham P.K."/>
            <person name="Rizzo M."/>
            <person name="Rooney T."/>
            <person name="Rowley D."/>
            <person name="Sakano H."/>
            <person name="Salzberg S.L."/>
            <person name="Schwartz J.R."/>
            <person name="Shinn P."/>
            <person name="Southwick A.M."/>
            <person name="Sun H."/>
            <person name="Tallon L.J."/>
            <person name="Tambunga G."/>
            <person name="Toriumi M.J."/>
            <person name="Town C.D."/>
            <person name="Utterback T."/>
            <person name="Van Aken S."/>
            <person name="Vaysberg M."/>
            <person name="Vysotskaia V.S."/>
            <person name="Walker M."/>
            <person name="Wu D."/>
            <person name="Yu G."/>
            <person name="Fraser C.M."/>
            <person name="Venter J.C."/>
            <person name="Davis R.W."/>
        </authorList>
    </citation>
    <scope>NUCLEOTIDE SEQUENCE [LARGE SCALE GENOMIC DNA]</scope>
    <source>
        <strain>cv. Columbia</strain>
    </source>
</reference>
<reference key="2">
    <citation type="journal article" date="2017" name="Plant J.">
        <title>Araport11: a complete reannotation of the Arabidopsis thaliana reference genome.</title>
        <authorList>
            <person name="Cheng C.Y."/>
            <person name="Krishnakumar V."/>
            <person name="Chan A.P."/>
            <person name="Thibaud-Nissen F."/>
            <person name="Schobel S."/>
            <person name="Town C.D."/>
        </authorList>
    </citation>
    <scope>GENOME REANNOTATION</scope>
    <source>
        <strain>cv. Columbia</strain>
    </source>
</reference>
<reference key="3">
    <citation type="journal article" date="2003" name="Science">
        <title>Empirical analysis of transcriptional activity in the Arabidopsis genome.</title>
        <authorList>
            <person name="Yamada K."/>
            <person name="Lim J."/>
            <person name="Dale J.M."/>
            <person name="Chen H."/>
            <person name="Shinn P."/>
            <person name="Palm C.J."/>
            <person name="Southwick A.M."/>
            <person name="Wu H.C."/>
            <person name="Kim C.J."/>
            <person name="Nguyen M."/>
            <person name="Pham P.K."/>
            <person name="Cheuk R.F."/>
            <person name="Karlin-Newmann G."/>
            <person name="Liu S.X."/>
            <person name="Lam B."/>
            <person name="Sakano H."/>
            <person name="Wu T."/>
            <person name="Yu G."/>
            <person name="Miranda M."/>
            <person name="Quach H.L."/>
            <person name="Tripp M."/>
            <person name="Chang C.H."/>
            <person name="Lee J.M."/>
            <person name="Toriumi M.J."/>
            <person name="Chan M.M."/>
            <person name="Tang C.C."/>
            <person name="Onodera C.S."/>
            <person name="Deng J.M."/>
            <person name="Akiyama K."/>
            <person name="Ansari Y."/>
            <person name="Arakawa T."/>
            <person name="Banh J."/>
            <person name="Banno F."/>
            <person name="Bowser L."/>
            <person name="Brooks S.Y."/>
            <person name="Carninci P."/>
            <person name="Chao Q."/>
            <person name="Choy N."/>
            <person name="Enju A."/>
            <person name="Goldsmith A.D."/>
            <person name="Gurjal M."/>
            <person name="Hansen N.F."/>
            <person name="Hayashizaki Y."/>
            <person name="Johnson-Hopson C."/>
            <person name="Hsuan V.W."/>
            <person name="Iida K."/>
            <person name="Karnes M."/>
            <person name="Khan S."/>
            <person name="Koesema E."/>
            <person name="Ishida J."/>
            <person name="Jiang P.X."/>
            <person name="Jones T."/>
            <person name="Kawai J."/>
            <person name="Kamiya A."/>
            <person name="Meyers C."/>
            <person name="Nakajima M."/>
            <person name="Narusaka M."/>
            <person name="Seki M."/>
            <person name="Sakurai T."/>
            <person name="Satou M."/>
            <person name="Tamse R."/>
            <person name="Vaysberg M."/>
            <person name="Wallender E.K."/>
            <person name="Wong C."/>
            <person name="Yamamura Y."/>
            <person name="Yuan S."/>
            <person name="Shinozaki K."/>
            <person name="Davis R.W."/>
            <person name="Theologis A."/>
            <person name="Ecker J.R."/>
        </authorList>
    </citation>
    <scope>NUCLEOTIDE SEQUENCE [LARGE SCALE MRNA]</scope>
    <source>
        <strain>cv. Columbia</strain>
    </source>
</reference>
<reference key="4">
    <citation type="journal article" date="2012" name="Mol. Cell. Proteomics">
        <title>Comparative large-scale characterisation of plant vs. mammal proteins reveals similar and idiosyncratic N-alpha acetylation features.</title>
        <authorList>
            <person name="Bienvenut W.V."/>
            <person name="Sumpton D."/>
            <person name="Martinez A."/>
            <person name="Lilla S."/>
            <person name="Espagne C."/>
            <person name="Meinnel T."/>
            <person name="Giglione C."/>
        </authorList>
    </citation>
    <scope>ACETYLATION [LARGE SCALE ANALYSIS] AT GLY-2</scope>
    <scope>CLEAVAGE OF INITIATOR METHIONINE [LARGE SCALE ANALYSIS]</scope>
    <scope>IDENTIFICATION BY MASS SPECTROMETRY [LARGE SCALE ANALYSIS]</scope>
</reference>
<reference key="5">
    <citation type="journal article" date="2013" name="Nat. Chem. Biol.">
        <title>Coordination of auxin and ethylene biosynthesis by the aminotransferase VAS1.</title>
        <authorList>
            <person name="Zheng Z."/>
            <person name="Guo Y."/>
            <person name="Novak O."/>
            <person name="Dai X."/>
            <person name="Zhao Y."/>
            <person name="Ljung K."/>
            <person name="Noel J.P."/>
            <person name="Chory J."/>
        </authorList>
    </citation>
    <scope>FUNCTION</scope>
    <scope>DISRUPTION PHENOTYPE</scope>
    <scope>MUTAGENESIS OF PRO-66; LEU-77; GLY-179; CYS-219 AND ALA-269</scope>
    <scope>CATALYTIC ACTIVITY</scope>
    <scope>BIOPHYSICOCHEMICAL PROPERTIES</scope>
    <scope>SUBCELLULAR LOCATION</scope>
    <scope>TISSUE SPECIFICITY</scope>
    <source>
        <strain>cv. Columbia</strain>
        <strain>cv. Landsberg erecta</strain>
    </source>
</reference>
<reference key="6">
    <citation type="journal article" date="2015" name="Genetics">
        <title>Auxin and tryptophan homeostasis are facilitated by the ISS1/VAS1 aromatic aminotransferase in Arabidopsis.</title>
        <authorList>
            <person name="Pieck M."/>
            <person name="Yuan Y."/>
            <person name="Godfrey J."/>
            <person name="Fisher C."/>
            <person name="Zolj S."/>
            <person name="Vaughan D."/>
            <person name="Thomas N."/>
            <person name="Wu C."/>
            <person name="Ramos J."/>
            <person name="Lee N."/>
            <person name="Normanly J."/>
            <person name="Celenza J.L."/>
        </authorList>
    </citation>
    <scope>FUNCTION</scope>
    <scope>DISRUPTION PHENOTYPE</scope>
    <scope>MUTAGENESIS OF ARG-362</scope>
    <scope>CATALYTIC ACTIVITY</scope>
    <source>
        <strain>cv. Columbia</strain>
        <strain>cv. Wassilewskija</strain>
    </source>
</reference>
<accession>Q9C969</accession>
<evidence type="ECO:0000250" key="1">
    <source>
        <dbReference type="UniProtKB" id="O84395"/>
    </source>
</evidence>
<evidence type="ECO:0000250" key="2">
    <source>
        <dbReference type="UniProtKB" id="P00509"/>
    </source>
</evidence>
<evidence type="ECO:0000250" key="3">
    <source>
        <dbReference type="UniProtKB" id="Q93ZN9"/>
    </source>
</evidence>
<evidence type="ECO:0000269" key="4">
    <source>
    </source>
</evidence>
<evidence type="ECO:0000269" key="5">
    <source>
    </source>
</evidence>
<evidence type="ECO:0000303" key="6">
    <source>
    </source>
</evidence>
<evidence type="ECO:0000303" key="7">
    <source>
    </source>
</evidence>
<evidence type="ECO:0000305" key="8"/>
<evidence type="ECO:0000312" key="9">
    <source>
        <dbReference type="Araport" id="AT1G80360"/>
    </source>
</evidence>
<evidence type="ECO:0000312" key="10">
    <source>
        <dbReference type="EMBL" id="AAG52437.1"/>
    </source>
</evidence>
<evidence type="ECO:0007744" key="11">
    <source>
    </source>
</evidence>
<feature type="initiator methionine" description="Removed" evidence="11">
    <location>
        <position position="1"/>
    </location>
</feature>
<feature type="chain" id="PRO_0000440181" description="Aromatic aminotransferase ISS1">
    <location>
        <begin position="2"/>
        <end position="394"/>
    </location>
</feature>
<feature type="binding site" evidence="2">
    <location>
        <position position="38"/>
    </location>
    <ligand>
        <name>substrate</name>
    </ligand>
</feature>
<feature type="binding site" evidence="3">
    <location>
        <position position="64"/>
    </location>
    <ligand>
        <name>pyridoxal 5'-phosphate</name>
        <dbReference type="ChEBI" id="CHEBI:597326"/>
    </ligand>
</feature>
<feature type="binding site" evidence="1">
    <location>
        <begin position="98"/>
        <end position="99"/>
    </location>
    <ligand>
        <name>pyridoxal 5'-phosphate</name>
        <dbReference type="ChEBI" id="CHEBI:597326"/>
    </ligand>
</feature>
<feature type="binding site" evidence="1">
    <location>
        <position position="123"/>
    </location>
    <ligand>
        <name>pyridoxal 5'-phosphate</name>
        <dbReference type="ChEBI" id="CHEBI:597326"/>
    </ligand>
</feature>
<feature type="binding site" evidence="3">
    <location>
        <position position="123"/>
    </location>
    <ligand>
        <name>substrate</name>
    </ligand>
</feature>
<feature type="binding site" evidence="1">
    <location>
        <position position="176"/>
    </location>
    <ligand>
        <name>pyridoxal 5'-phosphate</name>
        <dbReference type="ChEBI" id="CHEBI:597326"/>
    </ligand>
</feature>
<feature type="binding site" evidence="2">
    <location>
        <position position="176"/>
    </location>
    <ligand>
        <name>substrate</name>
    </ligand>
</feature>
<feature type="binding site" evidence="1">
    <location>
        <position position="207"/>
    </location>
    <ligand>
        <name>pyridoxal 5'-phosphate</name>
        <dbReference type="ChEBI" id="CHEBI:597326"/>
    </ligand>
</feature>
<feature type="binding site" evidence="1">
    <location>
        <begin position="230"/>
        <end position="232"/>
    </location>
    <ligand>
        <name>pyridoxal 5'-phosphate</name>
        <dbReference type="ChEBI" id="CHEBI:597326"/>
    </ligand>
</feature>
<feature type="binding site" evidence="3">
    <location>
        <position position="241"/>
    </location>
    <ligand>
        <name>pyridoxal 5'-phosphate</name>
        <dbReference type="ChEBI" id="CHEBI:597326"/>
    </ligand>
</feature>
<feature type="binding site" evidence="3">
    <location>
        <position position="362"/>
    </location>
    <ligand>
        <name>substrate</name>
    </ligand>
</feature>
<feature type="binding site" evidence="2">
    <location>
        <position position="374"/>
    </location>
    <ligand>
        <name>substrate</name>
    </ligand>
</feature>
<feature type="modified residue" description="N-acetylglycine" evidence="11">
    <location>
        <position position="2"/>
    </location>
</feature>
<feature type="modified residue" description="N6-(pyridoxal phosphate)lysine" evidence="1">
    <location>
        <position position="233"/>
    </location>
</feature>
<feature type="mutagenesis site" description="In vas1-4; suppressor of sav3 mutant plants leading to rescued hypocotyl elongation in response to shade and restored auxin biosynthetic pathway." evidence="4">
    <original>P</original>
    <variation>L</variation>
    <location>
        <position position="66"/>
    </location>
</feature>
<feature type="mutagenesis site" description="In vas1-5; suppressor of sav3 mutant plants leading to rescued hypocotyl elongation in response to shade and restored auxin biosynthetic pathway." evidence="4">
    <original>L</original>
    <variation>F</variation>
    <location>
        <position position="77"/>
    </location>
</feature>
<feature type="mutagenesis site" description="In vas1-2; suppressor of sav3 mutant plants leading to rescued hypocotyl elongation in response to shade and restored auxin biosynthetic pathway. Increases levels of auxin (IAA) and indole-3-pyruvic acid (3-IPA)." evidence="4">
    <original>G</original>
    <variation>D</variation>
    <location>
        <position position="179"/>
    </location>
</feature>
<feature type="mutagenesis site" description="In vas1-7; suppressor of sav3 mutant plants leading to rescued hypocotyl elongation in response to shade and restored auxin biosynthetic pathway." evidence="4">
    <original>C</original>
    <variation>Y</variation>
    <location>
        <position position="219"/>
    </location>
</feature>
<feature type="mutagenesis site" description="In vas1-8; suppressor of sav3 mutant plants leading to rescued hypocotyl elongation in response to shade and restored auxin biosynthetic pathway." evidence="4">
    <original>A</original>
    <variation>T</variation>
    <location>
        <position position="269"/>
    </location>
</feature>
<feature type="mutagenesis site" description="In iss1-2; indole-dependent auxin (IAA) overproduction phenotypes including leaf epinasty and adventitious rooting." evidence="5">
    <original>R</original>
    <variation>W</variation>
    <location>
        <position position="362"/>
    </location>
</feature>
<proteinExistence type="evidence at protein level"/>
<sequence length="394" mass="43762">MGSFGMLSRRTLGTDMPVMAQIRSLMAELTNPMSLAQGVVHWQPPQKALEKVKELVWDPIISSYGPDEGLPELRQALLKKLREENKLTNSQVMVTAGANQAFVNLVITLCDAGDSVVMFEPYYFNSYMAFQMTGVTNIIVGPGQSDTLYPDADWLERTLSESKPTPKVVTVVNPGNPSGTYVPEPLLKRIAQICKDAGCWLIVDNTYEYFMYDGLKHCCVEGDHIVNVFSFSKTYGMMGWRLGYIAYSERLDGFATELVKIQDNIPICAAIISQRLAVYALEEGSGWITERVKSLVKNRDIVKEALEPLGKENVKGGEGAIYLWAKLPEGHRDDFKVVRWLAHRHGVVVIPGCASGSPGYLRVSFGGLQEVEMRAAAARLRKGIEELLHHGMVE</sequence>
<gene>
    <name evidence="7" type="primary">ISS1</name>
    <name evidence="6" type="synonym">VAS1</name>
    <name evidence="9" type="ordered locus">At1g80360</name>
    <name evidence="10" type="ORF">F5I6.11</name>
</gene>
<name>ISS1_ARATH</name>
<comment type="function">
    <text evidence="4 5">Coordinates and prevents auxin (IAA) and ethylene biosynthesis, thus regulating auxin homeostasis in young seedlings (PubMed:23377040, PubMed:26163189). Shows aminotransferase activity with methionine; can use the ethylene biosynthetic intermediate L-methionine (L-Met) as an amino donor and the auxin biosynthetic intermediate, indole-3-pyruvic acid (3-IPA) as an amino acceptor to produce L-tryptophan (L-Trp) and 2-oxo-4-methylthiobutyric acid (KMBA) (PubMed:23377040). Can also use tryptophan (Trp), phenylalanine (Phe), and tyrosine (Tyr) as substrates. Regulates tryptophan (Trp) homeostasis and catabolism in mature plants. Also possibly involved in the metabolism of other aromatic amino acids and phenylpropanoid homeostasis (PubMed:26163189).</text>
</comment>
<comment type="catalytic activity">
    <reaction evidence="4 5">
        <text>a 2-oxocarboxylate + L-methionine = 4-methylsulfanyl-2-oxobutanoate + an L-alpha-amino acid</text>
        <dbReference type="Rhea" id="RHEA:31763"/>
        <dbReference type="ChEBI" id="CHEBI:16723"/>
        <dbReference type="ChEBI" id="CHEBI:35179"/>
        <dbReference type="ChEBI" id="CHEBI:57844"/>
        <dbReference type="ChEBI" id="CHEBI:59869"/>
        <dbReference type="EC" id="2.6.1.88"/>
    </reaction>
</comment>
<comment type="catalytic activity">
    <reaction evidence="5">
        <text>L-tryptophan + 2-oxoglutarate = indole-3-pyruvate + L-glutamate</text>
        <dbReference type="Rhea" id="RHEA:14093"/>
        <dbReference type="ChEBI" id="CHEBI:16810"/>
        <dbReference type="ChEBI" id="CHEBI:17640"/>
        <dbReference type="ChEBI" id="CHEBI:29985"/>
        <dbReference type="ChEBI" id="CHEBI:57912"/>
        <dbReference type="EC" id="2.6.1.27"/>
    </reaction>
</comment>
<comment type="catalytic activity">
    <reaction evidence="5">
        <text>L-tyrosine + 2-oxoglutarate = 3-(4-hydroxyphenyl)pyruvate + L-glutamate</text>
        <dbReference type="Rhea" id="RHEA:15093"/>
        <dbReference type="ChEBI" id="CHEBI:16810"/>
        <dbReference type="ChEBI" id="CHEBI:29985"/>
        <dbReference type="ChEBI" id="CHEBI:36242"/>
        <dbReference type="ChEBI" id="CHEBI:58315"/>
        <dbReference type="EC" id="2.6.1.5"/>
    </reaction>
</comment>
<comment type="cofactor">
    <cofactor evidence="2">
        <name>pyridoxal 5'-phosphate</name>
        <dbReference type="ChEBI" id="CHEBI:597326"/>
    </cofactor>
</comment>
<comment type="biophysicochemical properties">
    <kinetics>
        <KM evidence="4">70 uM for indole-3-pyruvic acid (at pH 8.5 and 37 degrees Celsius)</KM>
        <KM evidence="4">630 uM for L-Met (at pH 8.5 and 37 degrees Celsius)</KM>
        <KM evidence="4">2600 uM for L-Phe (at pH 8.5 and 37 degrees Celsius)</KM>
        <Vmax evidence="4">1.0 umol/min/ug enzyme with indole-3-pyruvic acid as substrate (at pH 8 and 23 degrees Celsius)</Vmax>
        <Vmax evidence="4">0.82 umol/min/ug enzyme with L-Met as substrate (at pH 8 and 23 degrees Celsius)</Vmax>
        <Vmax evidence="4">0.14 umol/min/ug enzyme with L-Phe as substrate (at pH 8 and 23 degrees Celsius)</Vmax>
        <text evidence="4">kcat is 2.5 min(-1) with indole-3-pyruvic acid as substrate. kcat is 1.9 min(-1) with L-Met as substrate. kcat is 3.16 min(-1) with L-Phe as substrate (at pH 8.5 and 37 degrees Celsius).</text>
    </kinetics>
</comment>
<comment type="subunit">
    <text evidence="2">Homodimer.</text>
</comment>
<comment type="subcellular location">
    <subcellularLocation>
        <location evidence="4">Cytoplasm</location>
    </subcellularLocation>
</comment>
<comment type="tissue specificity">
    <text evidence="4">Expressed in roots, cotyledons and flowers.</text>
</comment>
<comment type="disruption phenotype">
    <text evidence="4 5">Suppressor of sav3 mutant plants leading to rescued hypocotyl elongation in response to shade and restored auxin biosynthetic pathway. In continuous white light, elongated hypocotyls and petioles, with increased leaf hyponasty, decreased leaf area, and accelerated leaf senescence as well as early flowering. Increases levels of auxin (IAA), indole-3-pyruvic acid (3-IPA) and the ethylene precursor 1-aminocyclopropane-1-carboxylate (ACC) (PubMed:23377040). Indole-dependent auxin (IAA) overproduction phenotypes including leaf epinasty and adventitious rooting. In contrast to normal plants, uses primarily Trp-independent (Trp-I) IAA synthesis when grown on indole-supplemented medium, but uses primarily Trp-dependent (Trp-D) IAA synthesis when grown on unsupplemented medium. Accumulates strongly IAA and Trp when grown on indole, probably due to loss of Trp catabolism. Altered phenylpropanoid profile (PubMed:26163189).</text>
</comment>
<comment type="similarity">
    <text evidence="8">Belongs to the class-I pyridoxal-phosphate-dependent aminotransferase family.</text>
</comment>
<keyword id="KW-0007">Acetylation</keyword>
<keyword id="KW-0032">Aminotransferase</keyword>
<keyword id="KW-0073">Auxin biosynthesis</keyword>
<keyword id="KW-0963">Cytoplasm</keyword>
<keyword id="KW-0266">Ethylene biosynthesis</keyword>
<keyword id="KW-0587">Phenylpropanoid metabolism</keyword>
<keyword id="KW-0663">Pyridoxal phosphate</keyword>
<keyword id="KW-1185">Reference proteome</keyword>
<keyword id="KW-0808">Transferase</keyword>
<keyword id="KW-0823">Tryptophan catabolism</keyword>
<protein>
    <recommendedName>
        <fullName evidence="7">Aromatic aminotransferase ISS1</fullName>
        <ecNumber evidence="5">2.6.1.27</ecNumber>
        <ecNumber evidence="5">2.6.1.5</ecNumber>
        <ecNumber evidence="4 5">2.6.1.88</ecNumber>
    </recommendedName>
    <alternativeName>
        <fullName evidence="8">Methionine aminotransferase ISS1</fullName>
    </alternativeName>
    <alternativeName>
        <fullName evidence="8">Phenylalanine aminotransferase ISS1</fullName>
    </alternativeName>
    <alternativeName>
        <fullName evidence="7">Protein INDOLE SEVERE SENSITIVE 1</fullName>
    </alternativeName>
    <alternativeName>
        <fullName evidence="6">Protein REVERSAL OF SAV3 PHENOTYPE 1</fullName>
    </alternativeName>
    <alternativeName>
        <fullName evidence="8">Tryptophan aminotransferase ISS1</fullName>
    </alternativeName>
    <alternativeName>
        <fullName evidence="8">Tyrosine aminotransferase ISS1</fullName>
    </alternativeName>
</protein>
<organism>
    <name type="scientific">Arabidopsis thaliana</name>
    <name type="common">Mouse-ear cress</name>
    <dbReference type="NCBI Taxonomy" id="3702"/>
    <lineage>
        <taxon>Eukaryota</taxon>
        <taxon>Viridiplantae</taxon>
        <taxon>Streptophyta</taxon>
        <taxon>Embryophyta</taxon>
        <taxon>Tracheophyta</taxon>
        <taxon>Spermatophyta</taxon>
        <taxon>Magnoliopsida</taxon>
        <taxon>eudicotyledons</taxon>
        <taxon>Gunneridae</taxon>
        <taxon>Pentapetalae</taxon>
        <taxon>rosids</taxon>
        <taxon>malvids</taxon>
        <taxon>Brassicales</taxon>
        <taxon>Brassicaceae</taxon>
        <taxon>Camelineae</taxon>
        <taxon>Arabidopsis</taxon>
    </lineage>
</organism>